<protein>
    <recommendedName>
        <fullName evidence="2">D-alanine--D-alanine ligase</fullName>
        <ecNumber evidence="2">6.3.2.4</ecNumber>
    </recommendedName>
    <alternativeName>
        <fullName evidence="2">D-Ala-D-Ala ligase</fullName>
    </alternativeName>
    <alternativeName>
        <fullName evidence="2">D-alanylalanine synthetase</fullName>
    </alternativeName>
</protein>
<sequence length="305" mass="32505">MTVEELKKKKIAVLMGGLSAEREVSLNSGKAVLASLVKQGFRAVGIDVGRDLPQRLAEEQVELAFIALHGRFGEDGSVQGLLELMGIPYTGSGVLASALAIDKIASKVIFASAGLKLAPYQVLRRGEELKLANPLPVVVKPSREGSSVGVGIVRDPSRMQAALDEAFRYDSEILIEGFIDGREVQVGILNGKALGAIEIIPKGEFYDYEAKYTDGGAQHILPARLPEAVYAEVLRQGEKAHAALGCDCYSRVDFLVTETGDCFLLEVNTLPGMTDLSLLPEIAGGAGIAFGELVLRILQAASLKI</sequence>
<name>DDL_CITBB</name>
<proteinExistence type="inferred from homology"/>
<evidence type="ECO:0000250" key="1"/>
<evidence type="ECO:0000255" key="2">
    <source>
        <dbReference type="HAMAP-Rule" id="MF_00047"/>
    </source>
</evidence>
<feature type="chain" id="PRO_1000091183" description="D-alanine--D-alanine ligase">
    <location>
        <begin position="1"/>
        <end position="305"/>
    </location>
</feature>
<feature type="domain" description="ATP-grasp" evidence="2">
    <location>
        <begin position="107"/>
        <end position="299"/>
    </location>
</feature>
<feature type="binding site" evidence="2">
    <location>
        <begin position="134"/>
        <end position="185"/>
    </location>
    <ligand>
        <name>ATP</name>
        <dbReference type="ChEBI" id="CHEBI:30616"/>
    </ligand>
</feature>
<feature type="binding site" evidence="2">
    <location>
        <position position="253"/>
    </location>
    <ligand>
        <name>Mg(2+)</name>
        <dbReference type="ChEBI" id="CHEBI:18420"/>
        <label>1</label>
    </ligand>
</feature>
<feature type="binding site" evidence="2">
    <location>
        <position position="266"/>
    </location>
    <ligand>
        <name>Mg(2+)</name>
        <dbReference type="ChEBI" id="CHEBI:18420"/>
        <label>1</label>
    </ligand>
</feature>
<feature type="binding site" evidence="2">
    <location>
        <position position="266"/>
    </location>
    <ligand>
        <name>Mg(2+)</name>
        <dbReference type="ChEBI" id="CHEBI:18420"/>
        <label>2</label>
    </ligand>
</feature>
<feature type="binding site" evidence="2">
    <location>
        <position position="268"/>
    </location>
    <ligand>
        <name>Mg(2+)</name>
        <dbReference type="ChEBI" id="CHEBI:18420"/>
        <label>2</label>
    </ligand>
</feature>
<accession>B5EBQ4</accession>
<organism>
    <name type="scientific">Citrifermentans bemidjiense (strain ATCC BAA-1014 / DSM 16622 / JCM 12645 / Bem)</name>
    <name type="common">Geobacter bemidjiensis</name>
    <dbReference type="NCBI Taxonomy" id="404380"/>
    <lineage>
        <taxon>Bacteria</taxon>
        <taxon>Pseudomonadati</taxon>
        <taxon>Thermodesulfobacteriota</taxon>
        <taxon>Desulfuromonadia</taxon>
        <taxon>Geobacterales</taxon>
        <taxon>Geobacteraceae</taxon>
        <taxon>Citrifermentans</taxon>
    </lineage>
</organism>
<reference key="1">
    <citation type="submission" date="2008-07" db="EMBL/GenBank/DDBJ databases">
        <title>Complete sequence of Geobacter bemidjiensis BEM.</title>
        <authorList>
            <consortium name="US DOE Joint Genome Institute"/>
            <person name="Lucas S."/>
            <person name="Copeland A."/>
            <person name="Lapidus A."/>
            <person name="Glavina del Rio T."/>
            <person name="Dalin E."/>
            <person name="Tice H."/>
            <person name="Bruce D."/>
            <person name="Goodwin L."/>
            <person name="Pitluck S."/>
            <person name="Kiss H."/>
            <person name="Brettin T."/>
            <person name="Detter J.C."/>
            <person name="Han C."/>
            <person name="Kuske C.R."/>
            <person name="Schmutz J."/>
            <person name="Larimer F."/>
            <person name="Land M."/>
            <person name="Hauser L."/>
            <person name="Kyrpides N."/>
            <person name="Lykidis A."/>
            <person name="Lovley D."/>
            <person name="Richardson P."/>
        </authorList>
    </citation>
    <scope>NUCLEOTIDE SEQUENCE [LARGE SCALE GENOMIC DNA]</scope>
    <source>
        <strain>ATCC BAA-1014 / DSM 16622 / JCM 12645 / Bem</strain>
    </source>
</reference>
<comment type="function">
    <text evidence="2">Cell wall formation.</text>
</comment>
<comment type="catalytic activity">
    <reaction evidence="2">
        <text>2 D-alanine + ATP = D-alanyl-D-alanine + ADP + phosphate + H(+)</text>
        <dbReference type="Rhea" id="RHEA:11224"/>
        <dbReference type="ChEBI" id="CHEBI:15378"/>
        <dbReference type="ChEBI" id="CHEBI:30616"/>
        <dbReference type="ChEBI" id="CHEBI:43474"/>
        <dbReference type="ChEBI" id="CHEBI:57416"/>
        <dbReference type="ChEBI" id="CHEBI:57822"/>
        <dbReference type="ChEBI" id="CHEBI:456216"/>
        <dbReference type="EC" id="6.3.2.4"/>
    </reaction>
</comment>
<comment type="cofactor">
    <cofactor evidence="1">
        <name>Mg(2+)</name>
        <dbReference type="ChEBI" id="CHEBI:18420"/>
    </cofactor>
    <cofactor evidence="1">
        <name>Mn(2+)</name>
        <dbReference type="ChEBI" id="CHEBI:29035"/>
    </cofactor>
    <text evidence="1">Binds 2 magnesium or manganese ions per subunit.</text>
</comment>
<comment type="pathway">
    <text evidence="2">Cell wall biogenesis; peptidoglycan biosynthesis.</text>
</comment>
<comment type="subcellular location">
    <subcellularLocation>
        <location evidence="2">Cytoplasm</location>
    </subcellularLocation>
</comment>
<comment type="similarity">
    <text evidence="2">Belongs to the D-alanine--D-alanine ligase family.</text>
</comment>
<gene>
    <name evidence="2" type="primary">ddl</name>
    <name type="ordered locus">Gbem_0494</name>
</gene>
<keyword id="KW-0067">ATP-binding</keyword>
<keyword id="KW-0133">Cell shape</keyword>
<keyword id="KW-0961">Cell wall biogenesis/degradation</keyword>
<keyword id="KW-0963">Cytoplasm</keyword>
<keyword id="KW-0436">Ligase</keyword>
<keyword id="KW-0460">Magnesium</keyword>
<keyword id="KW-0464">Manganese</keyword>
<keyword id="KW-0479">Metal-binding</keyword>
<keyword id="KW-0547">Nucleotide-binding</keyword>
<keyword id="KW-0573">Peptidoglycan synthesis</keyword>
<keyword id="KW-1185">Reference proteome</keyword>
<dbReference type="EC" id="6.3.2.4" evidence="2"/>
<dbReference type="EMBL" id="CP001124">
    <property type="protein sequence ID" value="ACH37523.1"/>
    <property type="molecule type" value="Genomic_DNA"/>
</dbReference>
<dbReference type="RefSeq" id="WP_012528930.1">
    <property type="nucleotide sequence ID" value="NC_011146.1"/>
</dbReference>
<dbReference type="SMR" id="B5EBQ4"/>
<dbReference type="STRING" id="404380.Gbem_0494"/>
<dbReference type="KEGG" id="gbm:Gbem_0494"/>
<dbReference type="eggNOG" id="COG1181">
    <property type="taxonomic scope" value="Bacteria"/>
</dbReference>
<dbReference type="HOGENOM" id="CLU_039268_2_0_7"/>
<dbReference type="OrthoDB" id="9813261at2"/>
<dbReference type="UniPathway" id="UPA00219"/>
<dbReference type="Proteomes" id="UP000008825">
    <property type="component" value="Chromosome"/>
</dbReference>
<dbReference type="GO" id="GO:0005737">
    <property type="term" value="C:cytoplasm"/>
    <property type="evidence" value="ECO:0007669"/>
    <property type="project" value="UniProtKB-SubCell"/>
</dbReference>
<dbReference type="GO" id="GO:0005524">
    <property type="term" value="F:ATP binding"/>
    <property type="evidence" value="ECO:0007669"/>
    <property type="project" value="UniProtKB-KW"/>
</dbReference>
<dbReference type="GO" id="GO:0008716">
    <property type="term" value="F:D-alanine-D-alanine ligase activity"/>
    <property type="evidence" value="ECO:0007669"/>
    <property type="project" value="UniProtKB-UniRule"/>
</dbReference>
<dbReference type="GO" id="GO:0046872">
    <property type="term" value="F:metal ion binding"/>
    <property type="evidence" value="ECO:0007669"/>
    <property type="project" value="UniProtKB-KW"/>
</dbReference>
<dbReference type="GO" id="GO:0071555">
    <property type="term" value="P:cell wall organization"/>
    <property type="evidence" value="ECO:0007669"/>
    <property type="project" value="UniProtKB-KW"/>
</dbReference>
<dbReference type="GO" id="GO:0009252">
    <property type="term" value="P:peptidoglycan biosynthetic process"/>
    <property type="evidence" value="ECO:0007669"/>
    <property type="project" value="UniProtKB-UniRule"/>
</dbReference>
<dbReference type="GO" id="GO:0008360">
    <property type="term" value="P:regulation of cell shape"/>
    <property type="evidence" value="ECO:0007669"/>
    <property type="project" value="UniProtKB-KW"/>
</dbReference>
<dbReference type="Gene3D" id="3.40.50.20">
    <property type="match status" value="1"/>
</dbReference>
<dbReference type="Gene3D" id="3.30.1490.20">
    <property type="entry name" value="ATP-grasp fold, A domain"/>
    <property type="match status" value="1"/>
</dbReference>
<dbReference type="Gene3D" id="3.30.470.20">
    <property type="entry name" value="ATP-grasp fold, B domain"/>
    <property type="match status" value="1"/>
</dbReference>
<dbReference type="HAMAP" id="MF_00047">
    <property type="entry name" value="Dala_Dala_lig"/>
    <property type="match status" value="1"/>
</dbReference>
<dbReference type="InterPro" id="IPR011761">
    <property type="entry name" value="ATP-grasp"/>
</dbReference>
<dbReference type="InterPro" id="IPR013815">
    <property type="entry name" value="ATP_grasp_subdomain_1"/>
</dbReference>
<dbReference type="InterPro" id="IPR000291">
    <property type="entry name" value="D-Ala_lig_Van_CS"/>
</dbReference>
<dbReference type="InterPro" id="IPR005905">
    <property type="entry name" value="D_ala_D_ala"/>
</dbReference>
<dbReference type="InterPro" id="IPR011095">
    <property type="entry name" value="Dala_Dala_lig_C"/>
</dbReference>
<dbReference type="InterPro" id="IPR011127">
    <property type="entry name" value="Dala_Dala_lig_N"/>
</dbReference>
<dbReference type="InterPro" id="IPR016185">
    <property type="entry name" value="PreATP-grasp_dom_sf"/>
</dbReference>
<dbReference type="NCBIfam" id="TIGR01205">
    <property type="entry name" value="D_ala_D_alaTIGR"/>
    <property type="match status" value="1"/>
</dbReference>
<dbReference type="NCBIfam" id="NF002378">
    <property type="entry name" value="PRK01372.1"/>
    <property type="match status" value="1"/>
</dbReference>
<dbReference type="PANTHER" id="PTHR23132">
    <property type="entry name" value="D-ALANINE--D-ALANINE LIGASE"/>
    <property type="match status" value="1"/>
</dbReference>
<dbReference type="PANTHER" id="PTHR23132:SF23">
    <property type="entry name" value="D-ALANINE--D-ALANINE LIGASE B"/>
    <property type="match status" value="1"/>
</dbReference>
<dbReference type="Pfam" id="PF07478">
    <property type="entry name" value="Dala_Dala_lig_C"/>
    <property type="match status" value="1"/>
</dbReference>
<dbReference type="Pfam" id="PF01820">
    <property type="entry name" value="Dala_Dala_lig_N"/>
    <property type="match status" value="1"/>
</dbReference>
<dbReference type="PIRSF" id="PIRSF039102">
    <property type="entry name" value="Ddl/VanB"/>
    <property type="match status" value="1"/>
</dbReference>
<dbReference type="SUPFAM" id="SSF56059">
    <property type="entry name" value="Glutathione synthetase ATP-binding domain-like"/>
    <property type="match status" value="1"/>
</dbReference>
<dbReference type="SUPFAM" id="SSF52440">
    <property type="entry name" value="PreATP-grasp domain"/>
    <property type="match status" value="1"/>
</dbReference>
<dbReference type="PROSITE" id="PS50975">
    <property type="entry name" value="ATP_GRASP"/>
    <property type="match status" value="1"/>
</dbReference>
<dbReference type="PROSITE" id="PS00843">
    <property type="entry name" value="DALA_DALA_LIGASE_1"/>
    <property type="match status" value="1"/>
</dbReference>